<feature type="chain" id="PRO_0000348662" description="tRNA-cytidine(32) 2-sulfurtransferase">
    <location>
        <begin position="1"/>
        <end position="316"/>
    </location>
</feature>
<feature type="short sequence motif" description="PP-loop motif" evidence="1">
    <location>
        <begin position="58"/>
        <end position="63"/>
    </location>
</feature>
<feature type="binding site" evidence="1">
    <location>
        <position position="133"/>
    </location>
    <ligand>
        <name>[4Fe-4S] cluster</name>
        <dbReference type="ChEBI" id="CHEBI:49883"/>
    </ligand>
</feature>
<feature type="binding site" evidence="1">
    <location>
        <position position="136"/>
    </location>
    <ligand>
        <name>[4Fe-4S] cluster</name>
        <dbReference type="ChEBI" id="CHEBI:49883"/>
    </ligand>
</feature>
<feature type="binding site" evidence="1">
    <location>
        <position position="224"/>
    </location>
    <ligand>
        <name>[4Fe-4S] cluster</name>
        <dbReference type="ChEBI" id="CHEBI:49883"/>
    </ligand>
</feature>
<keyword id="KW-0004">4Fe-4S</keyword>
<keyword id="KW-0067">ATP-binding</keyword>
<keyword id="KW-0963">Cytoplasm</keyword>
<keyword id="KW-0408">Iron</keyword>
<keyword id="KW-0411">Iron-sulfur</keyword>
<keyword id="KW-0460">Magnesium</keyword>
<keyword id="KW-0479">Metal-binding</keyword>
<keyword id="KW-0547">Nucleotide-binding</keyword>
<keyword id="KW-1185">Reference proteome</keyword>
<keyword id="KW-0694">RNA-binding</keyword>
<keyword id="KW-0808">Transferase</keyword>
<keyword id="KW-0819">tRNA processing</keyword>
<keyword id="KW-0820">tRNA-binding</keyword>
<accession>Q5P3T7</accession>
<dbReference type="EC" id="2.8.1.-" evidence="1"/>
<dbReference type="EMBL" id="CR555306">
    <property type="protein sequence ID" value="CAI08027.1"/>
    <property type="molecule type" value="Genomic_DNA"/>
</dbReference>
<dbReference type="RefSeq" id="WP_011237720.1">
    <property type="nucleotide sequence ID" value="NC_006513.1"/>
</dbReference>
<dbReference type="SMR" id="Q5P3T7"/>
<dbReference type="STRING" id="76114.ebA3365"/>
<dbReference type="KEGG" id="eba:ebA3365"/>
<dbReference type="eggNOG" id="COG0037">
    <property type="taxonomic scope" value="Bacteria"/>
</dbReference>
<dbReference type="HOGENOM" id="CLU_026481_0_0_4"/>
<dbReference type="OrthoDB" id="9801054at2"/>
<dbReference type="Proteomes" id="UP000006552">
    <property type="component" value="Chromosome"/>
</dbReference>
<dbReference type="GO" id="GO:0005737">
    <property type="term" value="C:cytoplasm"/>
    <property type="evidence" value="ECO:0007669"/>
    <property type="project" value="UniProtKB-SubCell"/>
</dbReference>
<dbReference type="GO" id="GO:0051539">
    <property type="term" value="F:4 iron, 4 sulfur cluster binding"/>
    <property type="evidence" value="ECO:0007669"/>
    <property type="project" value="UniProtKB-UniRule"/>
</dbReference>
<dbReference type="GO" id="GO:0005524">
    <property type="term" value="F:ATP binding"/>
    <property type="evidence" value="ECO:0007669"/>
    <property type="project" value="UniProtKB-UniRule"/>
</dbReference>
<dbReference type="GO" id="GO:0000287">
    <property type="term" value="F:magnesium ion binding"/>
    <property type="evidence" value="ECO:0007669"/>
    <property type="project" value="UniProtKB-UniRule"/>
</dbReference>
<dbReference type="GO" id="GO:0016783">
    <property type="term" value="F:sulfurtransferase activity"/>
    <property type="evidence" value="ECO:0007669"/>
    <property type="project" value="UniProtKB-UniRule"/>
</dbReference>
<dbReference type="GO" id="GO:0000049">
    <property type="term" value="F:tRNA binding"/>
    <property type="evidence" value="ECO:0007669"/>
    <property type="project" value="UniProtKB-KW"/>
</dbReference>
<dbReference type="GO" id="GO:0034227">
    <property type="term" value="P:tRNA thio-modification"/>
    <property type="evidence" value="ECO:0007669"/>
    <property type="project" value="UniProtKB-UniRule"/>
</dbReference>
<dbReference type="CDD" id="cd24138">
    <property type="entry name" value="TtcA-like"/>
    <property type="match status" value="1"/>
</dbReference>
<dbReference type="Gene3D" id="3.40.50.620">
    <property type="entry name" value="HUPs"/>
    <property type="match status" value="1"/>
</dbReference>
<dbReference type="HAMAP" id="MF_01850">
    <property type="entry name" value="TtcA"/>
    <property type="match status" value="1"/>
</dbReference>
<dbReference type="InterPro" id="IPR014729">
    <property type="entry name" value="Rossmann-like_a/b/a_fold"/>
</dbReference>
<dbReference type="InterPro" id="IPR011063">
    <property type="entry name" value="TilS/TtcA_N"/>
</dbReference>
<dbReference type="InterPro" id="IPR012089">
    <property type="entry name" value="tRNA_Cyd_32_2_STrfase"/>
</dbReference>
<dbReference type="NCBIfam" id="NF007972">
    <property type="entry name" value="PRK10696.1"/>
    <property type="match status" value="1"/>
</dbReference>
<dbReference type="PANTHER" id="PTHR43686:SF1">
    <property type="entry name" value="AMINOTRAN_5 DOMAIN-CONTAINING PROTEIN"/>
    <property type="match status" value="1"/>
</dbReference>
<dbReference type="PANTHER" id="PTHR43686">
    <property type="entry name" value="SULFURTRANSFERASE-RELATED"/>
    <property type="match status" value="1"/>
</dbReference>
<dbReference type="Pfam" id="PF01171">
    <property type="entry name" value="ATP_bind_3"/>
    <property type="match status" value="1"/>
</dbReference>
<dbReference type="SUPFAM" id="SSF52402">
    <property type="entry name" value="Adenine nucleotide alpha hydrolases-like"/>
    <property type="match status" value="1"/>
</dbReference>
<sequence>MTPLSAVATPTPAPAEAADSRFSNTFLRLKKKLERGVGKAIADFNMIGDGDTVMVCVSGGKDSYTLLSCLLALRERAPVDFRIIAMNLDQKQPGFPAEVLPAYFESIGVEYRIVTEDTYSIVKDKIPEGKTTCSLCSRLRRGIIYRVARELGATRIALGHHRDDMLETLFLNLFFGGKIKAMPPKLVSDNGEHVVIRPLAYCTEADIAKFARTMEFPIIPCNLCGSQENAQRKQIKTMLQGWAREHPGRIESIATALGQVVPSHLADASLFDFRNLTRDTLVAEGDIAFDRAELPPASAAVMPTVMQLTDHRTDGK</sequence>
<reference key="1">
    <citation type="journal article" date="2005" name="Arch. Microbiol.">
        <title>The genome sequence of an anaerobic aromatic-degrading denitrifying bacterium, strain EbN1.</title>
        <authorList>
            <person name="Rabus R."/>
            <person name="Kube M."/>
            <person name="Heider J."/>
            <person name="Beck A."/>
            <person name="Heitmann K."/>
            <person name="Widdel F."/>
            <person name="Reinhardt R."/>
        </authorList>
    </citation>
    <scope>NUCLEOTIDE SEQUENCE [LARGE SCALE GENOMIC DNA]</scope>
    <source>
        <strain>DSM 19018 / LMG 30748 / EbN1</strain>
    </source>
</reference>
<name>TTCA_AROAE</name>
<gene>
    <name evidence="1" type="primary">ttcA</name>
    <name type="ordered locus">AZOSEA19020</name>
    <name type="ORF">ebA3365</name>
</gene>
<comment type="function">
    <text evidence="1">Catalyzes the ATP-dependent 2-thiolation of cytidine in position 32 of tRNA, to form 2-thiocytidine (s(2)C32). The sulfur atoms are provided by the cysteine/cysteine desulfurase (IscS) system.</text>
</comment>
<comment type="catalytic activity">
    <reaction evidence="1">
        <text>cytidine(32) in tRNA + S-sulfanyl-L-cysteinyl-[cysteine desulfurase] + AH2 + ATP = 2-thiocytidine(32) in tRNA + L-cysteinyl-[cysteine desulfurase] + A + AMP + diphosphate + H(+)</text>
        <dbReference type="Rhea" id="RHEA:57048"/>
        <dbReference type="Rhea" id="RHEA-COMP:10288"/>
        <dbReference type="Rhea" id="RHEA-COMP:12157"/>
        <dbReference type="Rhea" id="RHEA-COMP:12158"/>
        <dbReference type="Rhea" id="RHEA-COMP:14821"/>
        <dbReference type="ChEBI" id="CHEBI:13193"/>
        <dbReference type="ChEBI" id="CHEBI:15378"/>
        <dbReference type="ChEBI" id="CHEBI:17499"/>
        <dbReference type="ChEBI" id="CHEBI:29950"/>
        <dbReference type="ChEBI" id="CHEBI:30616"/>
        <dbReference type="ChEBI" id="CHEBI:33019"/>
        <dbReference type="ChEBI" id="CHEBI:61963"/>
        <dbReference type="ChEBI" id="CHEBI:82748"/>
        <dbReference type="ChEBI" id="CHEBI:141453"/>
        <dbReference type="ChEBI" id="CHEBI:456215"/>
    </reaction>
    <physiologicalReaction direction="left-to-right" evidence="1">
        <dbReference type="Rhea" id="RHEA:57049"/>
    </physiologicalReaction>
</comment>
<comment type="cofactor">
    <cofactor evidence="1">
        <name>Mg(2+)</name>
        <dbReference type="ChEBI" id="CHEBI:18420"/>
    </cofactor>
</comment>
<comment type="cofactor">
    <cofactor evidence="1">
        <name>[4Fe-4S] cluster</name>
        <dbReference type="ChEBI" id="CHEBI:49883"/>
    </cofactor>
    <text evidence="1">Binds 1 [4Fe-4S] cluster per subunit. The cluster is chelated by three Cys residues, the fourth Fe has a free coordination site that may bind a sulfur atom transferred from the persulfide of IscS.</text>
</comment>
<comment type="pathway">
    <text evidence="1">tRNA modification.</text>
</comment>
<comment type="subunit">
    <text evidence="1">Homodimer.</text>
</comment>
<comment type="subcellular location">
    <subcellularLocation>
        <location evidence="1">Cytoplasm</location>
    </subcellularLocation>
</comment>
<comment type="miscellaneous">
    <text evidence="1">The thiolation reaction likely consists of two steps: a first activation step by ATP to form an adenylated intermediate of the target base of tRNA, and a second nucleophilic substitution step of the sulfur (S) atom supplied by the hydrosulfide attached to the Fe-S cluster.</text>
</comment>
<comment type="similarity">
    <text evidence="1">Belongs to the TtcA family.</text>
</comment>
<evidence type="ECO:0000255" key="1">
    <source>
        <dbReference type="HAMAP-Rule" id="MF_01850"/>
    </source>
</evidence>
<protein>
    <recommendedName>
        <fullName evidence="1">tRNA-cytidine(32) 2-sulfurtransferase</fullName>
        <ecNumber evidence="1">2.8.1.-</ecNumber>
    </recommendedName>
    <alternativeName>
        <fullName evidence="1">Two-thiocytidine biosynthesis protein A</fullName>
    </alternativeName>
    <alternativeName>
        <fullName evidence="1">tRNA 2-thiocytidine biosynthesis protein TtcA</fullName>
    </alternativeName>
</protein>
<organism>
    <name type="scientific">Aromatoleum aromaticum (strain DSM 19018 / LMG 30748 / EbN1)</name>
    <name type="common">Azoarcus sp. (strain EbN1)</name>
    <dbReference type="NCBI Taxonomy" id="76114"/>
    <lineage>
        <taxon>Bacteria</taxon>
        <taxon>Pseudomonadati</taxon>
        <taxon>Pseudomonadota</taxon>
        <taxon>Betaproteobacteria</taxon>
        <taxon>Rhodocyclales</taxon>
        <taxon>Rhodocyclaceae</taxon>
        <taxon>Aromatoleum</taxon>
    </lineage>
</organism>
<proteinExistence type="inferred from homology"/>